<protein>
    <recommendedName>
        <fullName>Patr class I histocompatibility antigen, A-5 alpha chain</fullName>
    </recommendedName>
    <alternativeName>
        <fullName>ChLa class I histocompatibility antigen, A-5 alpha chain</fullName>
    </alternativeName>
</protein>
<sequence>MQVTAPRTVLLLLSAALALTETWAGSHSMKYFYTAVSRPGRGEPRFISVGYVDDTQFVWFDSDAASPREEPRAPWIEQEGPEYWDRETQISKTNAQTYRESLRNLRGYYNQSEAGSHIIQRMYGCDMGPDGRLLRGYEQYAYDGKDYIALNQDLSSWTAADTAAQITQRKWEAARWAEQLRAYLEGTCVEWLRRYLENGKETLQRADPPKTHVTHHPISDHEATLRCWALGFYPAEITLTWQRDGEDQTQDTELVETRPAGDRTFQKWAAVVVPSGEEQRYTCHVQHEGLPKPLTLRWEPSSQSTIPIVGIVAGLAVLAVVVIGAVVAAVMCRRKSSGGKGGSYSQAASSDSAQGSDVSLTA</sequence>
<reference key="1">
    <citation type="journal article" date="1990" name="Immunol. Rev.">
        <title>Comparison of class I MHC alleles in humans and apes.</title>
        <authorList>
            <person name="Lawlor D.A."/>
            <person name="Warren E."/>
            <person name="Ward F.E."/>
            <person name="Parham P."/>
        </authorList>
    </citation>
    <scope>NUCLEOTIDE SEQUENCE [MRNA]</scope>
</reference>
<keyword id="KW-1015">Disulfide bond</keyword>
<keyword id="KW-0325">Glycoprotein</keyword>
<keyword id="KW-0391">Immunity</keyword>
<keyword id="KW-0472">Membrane</keyword>
<keyword id="KW-0490">MHC I</keyword>
<keyword id="KW-0597">Phosphoprotein</keyword>
<keyword id="KW-1185">Reference proteome</keyword>
<keyword id="KW-0732">Signal</keyword>
<keyword id="KW-0812">Transmembrane</keyword>
<keyword id="KW-1133">Transmembrane helix</keyword>
<accession>P16210</accession>
<feature type="signal peptide" evidence="1">
    <location>
        <begin position="1"/>
        <end position="24"/>
    </location>
</feature>
<feature type="chain" id="PRO_0000018911" description="Patr class I histocompatibility antigen, A-5 alpha chain">
    <location>
        <begin position="25"/>
        <end position="362"/>
    </location>
</feature>
<feature type="topological domain" description="Extracellular" evidence="4">
    <location>
        <begin position="25"/>
        <end position="308"/>
    </location>
</feature>
<feature type="transmembrane region" description="Helical" evidence="4">
    <location>
        <begin position="309"/>
        <end position="332"/>
    </location>
</feature>
<feature type="topological domain" description="Cytoplasmic" evidence="4">
    <location>
        <begin position="333"/>
        <end position="362"/>
    </location>
</feature>
<feature type="domain" description="Ig-like C1-type">
    <location>
        <begin position="209"/>
        <end position="295"/>
    </location>
</feature>
<feature type="region of interest" description="Alpha-1">
    <location>
        <begin position="25"/>
        <end position="114"/>
    </location>
</feature>
<feature type="region of interest" description="Alpha-2">
    <location>
        <begin position="115"/>
        <end position="206"/>
    </location>
</feature>
<feature type="region of interest" description="Alpha-3">
    <location>
        <begin position="207"/>
        <end position="298"/>
    </location>
</feature>
<feature type="region of interest" description="Connecting peptide">
    <location>
        <begin position="299"/>
        <end position="308"/>
    </location>
</feature>
<feature type="region of interest" description="Disordered" evidence="6">
    <location>
        <begin position="336"/>
        <end position="362"/>
    </location>
</feature>
<feature type="compositionally biased region" description="Low complexity" evidence="6">
    <location>
        <begin position="343"/>
        <end position="362"/>
    </location>
</feature>
<feature type="modified residue" description="Phosphoserine" evidence="3">
    <location>
        <position position="343"/>
    </location>
</feature>
<feature type="modified residue" description="Phosphotyrosine" evidence="3">
    <location>
        <position position="344"/>
    </location>
</feature>
<feature type="modified residue" description="Phosphoserine" evidence="3">
    <location>
        <position position="345"/>
    </location>
</feature>
<feature type="modified residue" description="Phosphoserine" evidence="3">
    <location>
        <position position="349"/>
    </location>
</feature>
<feature type="modified residue" description="Phosphoserine" evidence="2">
    <location>
        <position position="350"/>
    </location>
</feature>
<feature type="modified residue" description="Phosphoserine" evidence="2">
    <location>
        <position position="352"/>
    </location>
</feature>
<feature type="modified residue" description="Phosphoserine" evidence="2">
    <location>
        <position position="356"/>
    </location>
</feature>
<feature type="modified residue" description="Phosphoserine" evidence="2">
    <location>
        <position position="359"/>
    </location>
</feature>
<feature type="glycosylation site" description="N-linked (GlcNAc...) asparagine" evidence="1">
    <location>
        <position position="110"/>
    </location>
</feature>
<feature type="disulfide bond" evidence="5">
    <location>
        <begin position="125"/>
        <end position="188"/>
    </location>
</feature>
<feature type="disulfide bond" evidence="5">
    <location>
        <begin position="227"/>
        <end position="283"/>
    </location>
</feature>
<name>1A02_PANTR</name>
<comment type="function">
    <text>Involved in the presentation of foreign antigens to the immune system.</text>
</comment>
<comment type="subunit">
    <text>Heterodimer of an alpha chain and a beta chain (beta-2-microglobulin).</text>
</comment>
<comment type="subcellular location">
    <subcellularLocation>
        <location>Membrane</location>
        <topology>Single-pass type I membrane protein</topology>
    </subcellularLocation>
</comment>
<comment type="similarity">
    <text evidence="7">Belongs to the MHC class I family.</text>
</comment>
<proteinExistence type="evidence at transcript level"/>
<organism>
    <name type="scientific">Pan troglodytes</name>
    <name type="common">Chimpanzee</name>
    <dbReference type="NCBI Taxonomy" id="9598"/>
    <lineage>
        <taxon>Eukaryota</taxon>
        <taxon>Metazoa</taxon>
        <taxon>Chordata</taxon>
        <taxon>Craniata</taxon>
        <taxon>Vertebrata</taxon>
        <taxon>Euteleostomi</taxon>
        <taxon>Mammalia</taxon>
        <taxon>Eutheria</taxon>
        <taxon>Euarchontoglires</taxon>
        <taxon>Primates</taxon>
        <taxon>Haplorrhini</taxon>
        <taxon>Catarrhini</taxon>
        <taxon>Hominidae</taxon>
        <taxon>Pan</taxon>
    </lineage>
</organism>
<evidence type="ECO:0000250" key="1"/>
<evidence type="ECO:0000250" key="2">
    <source>
        <dbReference type="UniProtKB" id="P04439"/>
    </source>
</evidence>
<evidence type="ECO:0000250" key="3">
    <source>
        <dbReference type="UniProtKB" id="P18462"/>
    </source>
</evidence>
<evidence type="ECO:0000255" key="4"/>
<evidence type="ECO:0000255" key="5">
    <source>
        <dbReference type="PROSITE-ProRule" id="PRU00114"/>
    </source>
</evidence>
<evidence type="ECO:0000256" key="6">
    <source>
        <dbReference type="SAM" id="MobiDB-lite"/>
    </source>
</evidence>
<evidence type="ECO:0000305" key="7"/>
<dbReference type="EMBL" id="M30679">
    <property type="protein sequence ID" value="AAA87971.1"/>
    <property type="molecule type" value="mRNA"/>
</dbReference>
<dbReference type="PIR" id="I36962">
    <property type="entry name" value="I36962"/>
</dbReference>
<dbReference type="SMR" id="P16210"/>
<dbReference type="FunCoup" id="P16210">
    <property type="interactions" value="843"/>
</dbReference>
<dbReference type="PaxDb" id="9598-ENSPTRP00000061016"/>
<dbReference type="Ensembl" id="ENSPTRT00000072427.2">
    <property type="protein sequence ID" value="ENSPTRP00000061016.1"/>
    <property type="gene ID" value="ENSPTRG00000041261.2"/>
</dbReference>
<dbReference type="eggNOG" id="ENOG502RQEK">
    <property type="taxonomic scope" value="Eukaryota"/>
</dbReference>
<dbReference type="GeneTree" id="ENSGT01120000271826"/>
<dbReference type="HOGENOM" id="CLU_047501_1_1_1"/>
<dbReference type="InParanoid" id="P16210"/>
<dbReference type="OMA" id="QWIEESE"/>
<dbReference type="TreeFam" id="TF336617"/>
<dbReference type="Proteomes" id="UP000002277">
    <property type="component" value="Chromosome 6"/>
</dbReference>
<dbReference type="Bgee" id="ENSPTRG00000041261">
    <property type="expression patterns" value="Expressed in cortex of kidney and 21 other cell types or tissues"/>
</dbReference>
<dbReference type="GO" id="GO:0031901">
    <property type="term" value="C:early endosome membrane"/>
    <property type="evidence" value="ECO:0007669"/>
    <property type="project" value="UniProtKB-ARBA"/>
</dbReference>
<dbReference type="GO" id="GO:0012507">
    <property type="term" value="C:ER to Golgi transport vesicle membrane"/>
    <property type="evidence" value="ECO:0007669"/>
    <property type="project" value="UniProtKB-ARBA"/>
</dbReference>
<dbReference type="GO" id="GO:0009897">
    <property type="term" value="C:external side of plasma membrane"/>
    <property type="evidence" value="ECO:0000318"/>
    <property type="project" value="GO_Central"/>
</dbReference>
<dbReference type="GO" id="GO:0005615">
    <property type="term" value="C:extracellular space"/>
    <property type="evidence" value="ECO:0000318"/>
    <property type="project" value="GO_Central"/>
</dbReference>
<dbReference type="GO" id="GO:0098553">
    <property type="term" value="C:lumenal side of endoplasmic reticulum membrane"/>
    <property type="evidence" value="ECO:0007669"/>
    <property type="project" value="UniProtKB-ARBA"/>
</dbReference>
<dbReference type="GO" id="GO:0042612">
    <property type="term" value="C:MHC class I protein complex"/>
    <property type="evidence" value="ECO:0007669"/>
    <property type="project" value="UniProtKB-KW"/>
</dbReference>
<dbReference type="GO" id="GO:0030670">
    <property type="term" value="C:phagocytic vesicle membrane"/>
    <property type="evidence" value="ECO:0007669"/>
    <property type="project" value="UniProtKB-ARBA"/>
</dbReference>
<dbReference type="GO" id="GO:0055038">
    <property type="term" value="C:recycling endosome membrane"/>
    <property type="evidence" value="ECO:0007669"/>
    <property type="project" value="UniProtKB-ARBA"/>
</dbReference>
<dbReference type="GO" id="GO:0042605">
    <property type="term" value="F:peptide antigen binding"/>
    <property type="evidence" value="ECO:0000318"/>
    <property type="project" value="GO_Central"/>
</dbReference>
<dbReference type="GO" id="GO:0005102">
    <property type="term" value="F:signaling receptor binding"/>
    <property type="evidence" value="ECO:0000318"/>
    <property type="project" value="GO_Central"/>
</dbReference>
<dbReference type="GO" id="GO:0002486">
    <property type="term" value="P:antigen processing and presentation of endogenous peptide antigen via MHC class I via ER pathway, TAP-independent"/>
    <property type="evidence" value="ECO:0000318"/>
    <property type="project" value="GO_Central"/>
</dbReference>
<dbReference type="GO" id="GO:0002476">
    <property type="term" value="P:antigen processing and presentation of endogenous peptide antigen via MHC class Ib"/>
    <property type="evidence" value="ECO:0000318"/>
    <property type="project" value="GO_Central"/>
</dbReference>
<dbReference type="GO" id="GO:0006955">
    <property type="term" value="P:immune response"/>
    <property type="evidence" value="ECO:0000318"/>
    <property type="project" value="GO_Central"/>
</dbReference>
<dbReference type="GO" id="GO:0001916">
    <property type="term" value="P:positive regulation of T cell mediated cytotoxicity"/>
    <property type="evidence" value="ECO:0000318"/>
    <property type="project" value="GO_Central"/>
</dbReference>
<dbReference type="CDD" id="cd21026">
    <property type="entry name" value="IgC1_MHC_Ia_HLA-B"/>
    <property type="match status" value="1"/>
</dbReference>
<dbReference type="FunFam" id="2.60.40.10:FF:000014">
    <property type="entry name" value="H-2 class I histocompatibility antigen, alpha chain"/>
    <property type="match status" value="1"/>
</dbReference>
<dbReference type="FunFam" id="3.30.500.10:FF:000001">
    <property type="entry name" value="H-2 class I histocompatibility antigen, alpha chain"/>
    <property type="match status" value="1"/>
</dbReference>
<dbReference type="Gene3D" id="2.60.40.10">
    <property type="entry name" value="Immunoglobulins"/>
    <property type="match status" value="1"/>
</dbReference>
<dbReference type="Gene3D" id="3.30.500.10">
    <property type="entry name" value="MHC class I-like antigen recognition-like"/>
    <property type="match status" value="1"/>
</dbReference>
<dbReference type="InterPro" id="IPR007110">
    <property type="entry name" value="Ig-like_dom"/>
</dbReference>
<dbReference type="InterPro" id="IPR036179">
    <property type="entry name" value="Ig-like_dom_sf"/>
</dbReference>
<dbReference type="InterPro" id="IPR013783">
    <property type="entry name" value="Ig-like_fold"/>
</dbReference>
<dbReference type="InterPro" id="IPR003006">
    <property type="entry name" value="Ig/MHC_CS"/>
</dbReference>
<dbReference type="InterPro" id="IPR003597">
    <property type="entry name" value="Ig_C1-set"/>
</dbReference>
<dbReference type="InterPro" id="IPR050208">
    <property type="entry name" value="MHC_class-I_related"/>
</dbReference>
<dbReference type="InterPro" id="IPR011161">
    <property type="entry name" value="MHC_I-like_Ag-recog"/>
</dbReference>
<dbReference type="InterPro" id="IPR037055">
    <property type="entry name" value="MHC_I-like_Ag-recog_sf"/>
</dbReference>
<dbReference type="InterPro" id="IPR011162">
    <property type="entry name" value="MHC_I/II-like_Ag-recog"/>
</dbReference>
<dbReference type="InterPro" id="IPR001039">
    <property type="entry name" value="MHC_I_a_a1/a2"/>
</dbReference>
<dbReference type="InterPro" id="IPR010579">
    <property type="entry name" value="MHC_I_a_C"/>
</dbReference>
<dbReference type="PANTHER" id="PTHR16675:SF270">
    <property type="entry name" value="HLA CLASS I HISTOCOMPATIBILITY ANTIGEN, B ALPHA CHAIN"/>
    <property type="match status" value="1"/>
</dbReference>
<dbReference type="PANTHER" id="PTHR16675">
    <property type="entry name" value="MHC CLASS I-RELATED"/>
    <property type="match status" value="1"/>
</dbReference>
<dbReference type="Pfam" id="PF07654">
    <property type="entry name" value="C1-set"/>
    <property type="match status" value="1"/>
</dbReference>
<dbReference type="Pfam" id="PF00129">
    <property type="entry name" value="MHC_I"/>
    <property type="match status" value="1"/>
</dbReference>
<dbReference type="Pfam" id="PF06623">
    <property type="entry name" value="MHC_I_C"/>
    <property type="match status" value="1"/>
</dbReference>
<dbReference type="PRINTS" id="PR01638">
    <property type="entry name" value="MHCCLASSI"/>
</dbReference>
<dbReference type="SMART" id="SM00407">
    <property type="entry name" value="IGc1"/>
    <property type="match status" value="1"/>
</dbReference>
<dbReference type="SUPFAM" id="SSF48726">
    <property type="entry name" value="Immunoglobulin"/>
    <property type="match status" value="1"/>
</dbReference>
<dbReference type="SUPFAM" id="SSF54452">
    <property type="entry name" value="MHC antigen-recognition domain"/>
    <property type="match status" value="1"/>
</dbReference>
<dbReference type="PROSITE" id="PS50835">
    <property type="entry name" value="IG_LIKE"/>
    <property type="match status" value="1"/>
</dbReference>
<dbReference type="PROSITE" id="PS00290">
    <property type="entry name" value="IG_MHC"/>
    <property type="match status" value="1"/>
</dbReference>